<comment type="catalytic activity">
    <reaction evidence="1">
        <text>tRNA(Phe) + L-phenylalanine + ATP = L-phenylalanyl-tRNA(Phe) + AMP + diphosphate + H(+)</text>
        <dbReference type="Rhea" id="RHEA:19413"/>
        <dbReference type="Rhea" id="RHEA-COMP:9668"/>
        <dbReference type="Rhea" id="RHEA-COMP:9699"/>
        <dbReference type="ChEBI" id="CHEBI:15378"/>
        <dbReference type="ChEBI" id="CHEBI:30616"/>
        <dbReference type="ChEBI" id="CHEBI:33019"/>
        <dbReference type="ChEBI" id="CHEBI:58095"/>
        <dbReference type="ChEBI" id="CHEBI:78442"/>
        <dbReference type="ChEBI" id="CHEBI:78531"/>
        <dbReference type="ChEBI" id="CHEBI:456215"/>
        <dbReference type="EC" id="6.1.1.20"/>
    </reaction>
</comment>
<comment type="cofactor">
    <cofactor evidence="1">
        <name>Mg(2+)</name>
        <dbReference type="ChEBI" id="CHEBI:18420"/>
    </cofactor>
    <text evidence="1">Binds 2 magnesium ions per tetramer.</text>
</comment>
<comment type="subunit">
    <text evidence="1">Tetramer of two alpha and two beta subunits.</text>
</comment>
<comment type="subcellular location">
    <subcellularLocation>
        <location evidence="1">Cytoplasm</location>
    </subcellularLocation>
</comment>
<comment type="similarity">
    <text evidence="1">Belongs to the class-II aminoacyl-tRNA synthetase family. Phe-tRNA synthetase alpha subunit type 1 subfamily.</text>
</comment>
<accession>C5B850</accession>
<protein>
    <recommendedName>
        <fullName evidence="1">Phenylalanine--tRNA ligase alpha subunit</fullName>
        <ecNumber evidence="1">6.1.1.20</ecNumber>
    </recommendedName>
    <alternativeName>
        <fullName evidence="1">Phenylalanyl-tRNA synthetase alpha subunit</fullName>
        <shortName evidence="1">PheRS</shortName>
    </alternativeName>
</protein>
<sequence length="327" mass="36914">MSHLAELVAQAKAAVESAQDVAALDSVRVEFLGKKGHLTLQMTSLRNLPAEERPAAGAVINQAKQEVQEALNARKAALESVALNARLAEETIDVSLPGRRMENGGLHPVTRTIERIESFFSELGFAVATGPEIEDDYHNFDALNIPAHHPARADHDTFWFDATRLLRTQTSGVQIRTMQQQQPPIRIIAPGRVYRNDYDQTHTPMFHQMEGLIVDKDISFTNLKGTLHDFLRNFFEQDLQIRFRPSYFPFTEPSAEVDVMGKNGKWLEVLGCGMVHPNVLRNVGIDPQVYSGFAFGMGMERLTMLRYGVTDLRAFFENDLRFLKQFK</sequence>
<name>SYFA_EDWI9</name>
<feature type="chain" id="PRO_1000204824" description="Phenylalanine--tRNA ligase alpha subunit">
    <location>
        <begin position="1"/>
        <end position="327"/>
    </location>
</feature>
<feature type="binding site" evidence="1">
    <location>
        <position position="252"/>
    </location>
    <ligand>
        <name>Mg(2+)</name>
        <dbReference type="ChEBI" id="CHEBI:18420"/>
        <note>shared with beta subunit</note>
    </ligand>
</feature>
<organism>
    <name type="scientific">Edwardsiella ictaluri (strain 93-146)</name>
    <dbReference type="NCBI Taxonomy" id="634503"/>
    <lineage>
        <taxon>Bacteria</taxon>
        <taxon>Pseudomonadati</taxon>
        <taxon>Pseudomonadota</taxon>
        <taxon>Gammaproteobacteria</taxon>
        <taxon>Enterobacterales</taxon>
        <taxon>Hafniaceae</taxon>
        <taxon>Edwardsiella</taxon>
    </lineage>
</organism>
<gene>
    <name evidence="1" type="primary">pheS</name>
    <name type="ordered locus">NT01EI_1890</name>
</gene>
<proteinExistence type="inferred from homology"/>
<evidence type="ECO:0000255" key="1">
    <source>
        <dbReference type="HAMAP-Rule" id="MF_00281"/>
    </source>
</evidence>
<dbReference type="EC" id="6.1.1.20" evidence="1"/>
<dbReference type="EMBL" id="CP001600">
    <property type="protein sequence ID" value="ACR69066.1"/>
    <property type="molecule type" value="Genomic_DNA"/>
</dbReference>
<dbReference type="RefSeq" id="WP_015871210.1">
    <property type="nucleotide sequence ID" value="NZ_CP169062.1"/>
</dbReference>
<dbReference type="SMR" id="C5B850"/>
<dbReference type="STRING" id="67780.B6E78_02480"/>
<dbReference type="GeneID" id="69538836"/>
<dbReference type="KEGG" id="eic:NT01EI_1890"/>
<dbReference type="PATRIC" id="fig|634503.3.peg.1693"/>
<dbReference type="HOGENOM" id="CLU_025086_0_1_6"/>
<dbReference type="OrthoDB" id="9800719at2"/>
<dbReference type="Proteomes" id="UP000001485">
    <property type="component" value="Chromosome"/>
</dbReference>
<dbReference type="GO" id="GO:0005737">
    <property type="term" value="C:cytoplasm"/>
    <property type="evidence" value="ECO:0007669"/>
    <property type="project" value="UniProtKB-SubCell"/>
</dbReference>
<dbReference type="GO" id="GO:0005524">
    <property type="term" value="F:ATP binding"/>
    <property type="evidence" value="ECO:0007669"/>
    <property type="project" value="UniProtKB-UniRule"/>
</dbReference>
<dbReference type="GO" id="GO:0000287">
    <property type="term" value="F:magnesium ion binding"/>
    <property type="evidence" value="ECO:0007669"/>
    <property type="project" value="UniProtKB-UniRule"/>
</dbReference>
<dbReference type="GO" id="GO:0004826">
    <property type="term" value="F:phenylalanine-tRNA ligase activity"/>
    <property type="evidence" value="ECO:0007669"/>
    <property type="project" value="UniProtKB-UniRule"/>
</dbReference>
<dbReference type="GO" id="GO:0000049">
    <property type="term" value="F:tRNA binding"/>
    <property type="evidence" value="ECO:0007669"/>
    <property type="project" value="InterPro"/>
</dbReference>
<dbReference type="GO" id="GO:0006432">
    <property type="term" value="P:phenylalanyl-tRNA aminoacylation"/>
    <property type="evidence" value="ECO:0007669"/>
    <property type="project" value="UniProtKB-UniRule"/>
</dbReference>
<dbReference type="CDD" id="cd00496">
    <property type="entry name" value="PheRS_alpha_core"/>
    <property type="match status" value="1"/>
</dbReference>
<dbReference type="FunFam" id="3.30.930.10:FF:000003">
    <property type="entry name" value="Phenylalanine--tRNA ligase alpha subunit"/>
    <property type="match status" value="1"/>
</dbReference>
<dbReference type="Gene3D" id="3.30.930.10">
    <property type="entry name" value="Bira Bifunctional Protein, Domain 2"/>
    <property type="match status" value="1"/>
</dbReference>
<dbReference type="HAMAP" id="MF_00281">
    <property type="entry name" value="Phe_tRNA_synth_alpha1"/>
    <property type="match status" value="1"/>
</dbReference>
<dbReference type="InterPro" id="IPR006195">
    <property type="entry name" value="aa-tRNA-synth_II"/>
</dbReference>
<dbReference type="InterPro" id="IPR045864">
    <property type="entry name" value="aa-tRNA-synth_II/BPL/LPL"/>
</dbReference>
<dbReference type="InterPro" id="IPR004529">
    <property type="entry name" value="Phe-tRNA-synth_IIc_asu"/>
</dbReference>
<dbReference type="InterPro" id="IPR004188">
    <property type="entry name" value="Phe-tRNA_ligase_II_N"/>
</dbReference>
<dbReference type="InterPro" id="IPR022911">
    <property type="entry name" value="Phe_tRNA_ligase_alpha1_bac"/>
</dbReference>
<dbReference type="InterPro" id="IPR002319">
    <property type="entry name" value="Phenylalanyl-tRNA_Synthase"/>
</dbReference>
<dbReference type="InterPro" id="IPR010978">
    <property type="entry name" value="tRNA-bd_arm"/>
</dbReference>
<dbReference type="NCBIfam" id="TIGR00468">
    <property type="entry name" value="pheS"/>
    <property type="match status" value="1"/>
</dbReference>
<dbReference type="PANTHER" id="PTHR11538:SF41">
    <property type="entry name" value="PHENYLALANINE--TRNA LIGASE, MITOCHONDRIAL"/>
    <property type="match status" value="1"/>
</dbReference>
<dbReference type="PANTHER" id="PTHR11538">
    <property type="entry name" value="PHENYLALANYL-TRNA SYNTHETASE"/>
    <property type="match status" value="1"/>
</dbReference>
<dbReference type="Pfam" id="PF02912">
    <property type="entry name" value="Phe_tRNA-synt_N"/>
    <property type="match status" value="1"/>
</dbReference>
<dbReference type="Pfam" id="PF01409">
    <property type="entry name" value="tRNA-synt_2d"/>
    <property type="match status" value="1"/>
</dbReference>
<dbReference type="SUPFAM" id="SSF55681">
    <property type="entry name" value="Class II aaRS and biotin synthetases"/>
    <property type="match status" value="1"/>
</dbReference>
<dbReference type="SUPFAM" id="SSF46589">
    <property type="entry name" value="tRNA-binding arm"/>
    <property type="match status" value="1"/>
</dbReference>
<dbReference type="PROSITE" id="PS50862">
    <property type="entry name" value="AA_TRNA_LIGASE_II"/>
    <property type="match status" value="1"/>
</dbReference>
<reference key="1">
    <citation type="submission" date="2009-03" db="EMBL/GenBank/DDBJ databases">
        <title>Complete genome sequence of Edwardsiella ictaluri 93-146.</title>
        <authorList>
            <person name="Williams M.L."/>
            <person name="Gillaspy A.F."/>
            <person name="Dyer D.W."/>
            <person name="Thune R.L."/>
            <person name="Waldbieser G.C."/>
            <person name="Schuster S.C."/>
            <person name="Gipson J."/>
            <person name="Zaitshik J."/>
            <person name="Landry C."/>
            <person name="Lawrence M.L."/>
        </authorList>
    </citation>
    <scope>NUCLEOTIDE SEQUENCE [LARGE SCALE GENOMIC DNA]</scope>
    <source>
        <strain>93-146</strain>
    </source>
</reference>
<keyword id="KW-0030">Aminoacyl-tRNA synthetase</keyword>
<keyword id="KW-0067">ATP-binding</keyword>
<keyword id="KW-0963">Cytoplasm</keyword>
<keyword id="KW-0436">Ligase</keyword>
<keyword id="KW-0460">Magnesium</keyword>
<keyword id="KW-0479">Metal-binding</keyword>
<keyword id="KW-0547">Nucleotide-binding</keyword>
<keyword id="KW-0648">Protein biosynthesis</keyword>